<accession>Q6L1Q0</accession>
<reference key="1">
    <citation type="journal article" date="2004" name="Proc. Natl. Acad. Sci. U.S.A.">
        <title>Genome sequence of Picrophilus torridus and its implications for life around pH 0.</title>
        <authorList>
            <person name="Fuetterer O."/>
            <person name="Angelov A."/>
            <person name="Liesegang H."/>
            <person name="Gottschalk G."/>
            <person name="Schleper C."/>
            <person name="Schepers B."/>
            <person name="Dock C."/>
            <person name="Antranikian G."/>
            <person name="Liebl W."/>
        </authorList>
    </citation>
    <scope>NUCLEOTIDE SEQUENCE [LARGE SCALE GENOMIC DNA]</scope>
    <source>
        <strain>ATCC 700027 / DSM 9790 / JCM 10055 / NBRC 100828 / KAW 2/3</strain>
    </source>
</reference>
<proteinExistence type="inferred from homology"/>
<feature type="chain" id="PRO_0000134327" description="Small ribosomal subunit protein uS2">
    <location>
        <begin position="1"/>
        <end position="200"/>
    </location>
</feature>
<evidence type="ECO:0000255" key="1">
    <source>
        <dbReference type="HAMAP-Rule" id="MF_00291"/>
    </source>
</evidence>
<evidence type="ECO:0000305" key="2"/>
<protein>
    <recommendedName>
        <fullName evidence="1">Small ribosomal subunit protein uS2</fullName>
    </recommendedName>
    <alternativeName>
        <fullName evidence="2">30S ribosomal protein S2</fullName>
    </alternativeName>
</protein>
<dbReference type="EMBL" id="AE017261">
    <property type="protein sequence ID" value="AAT43102.1"/>
    <property type="molecule type" value="Genomic_DNA"/>
</dbReference>
<dbReference type="SMR" id="Q6L1Q0"/>
<dbReference type="FunCoup" id="Q6L1Q0">
    <property type="interactions" value="131"/>
</dbReference>
<dbReference type="STRING" id="263820.PTO0517"/>
<dbReference type="PaxDb" id="263820-PTO0517"/>
<dbReference type="KEGG" id="pto:PTO0517"/>
<dbReference type="PATRIC" id="fig|263820.9.peg.545"/>
<dbReference type="eggNOG" id="arCOG04245">
    <property type="taxonomic scope" value="Archaea"/>
</dbReference>
<dbReference type="HOGENOM" id="CLU_058171_3_0_2"/>
<dbReference type="InParanoid" id="Q6L1Q0"/>
<dbReference type="Proteomes" id="UP000000438">
    <property type="component" value="Chromosome"/>
</dbReference>
<dbReference type="GO" id="GO:0015935">
    <property type="term" value="C:small ribosomal subunit"/>
    <property type="evidence" value="ECO:0007669"/>
    <property type="project" value="InterPro"/>
</dbReference>
<dbReference type="GO" id="GO:0003735">
    <property type="term" value="F:structural constituent of ribosome"/>
    <property type="evidence" value="ECO:0007669"/>
    <property type="project" value="InterPro"/>
</dbReference>
<dbReference type="GO" id="GO:0006412">
    <property type="term" value="P:translation"/>
    <property type="evidence" value="ECO:0007669"/>
    <property type="project" value="UniProtKB-UniRule"/>
</dbReference>
<dbReference type="FunFam" id="3.40.50.10490:FF:000030">
    <property type="entry name" value="30S ribosomal protein S2"/>
    <property type="match status" value="1"/>
</dbReference>
<dbReference type="Gene3D" id="3.40.50.10490">
    <property type="entry name" value="Glucose-6-phosphate isomerase like protein, domain 1"/>
    <property type="match status" value="1"/>
</dbReference>
<dbReference type="HAMAP" id="MF_00291_A">
    <property type="entry name" value="Ribosomal_uS2_A"/>
    <property type="match status" value="1"/>
</dbReference>
<dbReference type="InterPro" id="IPR001865">
    <property type="entry name" value="Ribosomal_uS2"/>
</dbReference>
<dbReference type="InterPro" id="IPR023454">
    <property type="entry name" value="Ribosomal_uS2_arc"/>
</dbReference>
<dbReference type="InterPro" id="IPR005707">
    <property type="entry name" value="Ribosomal_uS2_euk/arc"/>
</dbReference>
<dbReference type="InterPro" id="IPR023591">
    <property type="entry name" value="Ribosomal_uS2_flav_dom_sf"/>
</dbReference>
<dbReference type="NCBIfam" id="TIGR01012">
    <property type="entry name" value="uS2_euk_arch"/>
    <property type="match status" value="1"/>
</dbReference>
<dbReference type="PANTHER" id="PTHR11489">
    <property type="entry name" value="40S RIBOSOMAL PROTEIN SA"/>
    <property type="match status" value="1"/>
</dbReference>
<dbReference type="Pfam" id="PF00318">
    <property type="entry name" value="Ribosomal_S2"/>
    <property type="match status" value="2"/>
</dbReference>
<dbReference type="PRINTS" id="PR00395">
    <property type="entry name" value="RIBOSOMALS2"/>
</dbReference>
<dbReference type="SUPFAM" id="SSF52313">
    <property type="entry name" value="Ribosomal protein S2"/>
    <property type="match status" value="1"/>
</dbReference>
<organism>
    <name type="scientific">Picrophilus torridus (strain ATCC 700027 / DSM 9790 / JCM 10055 / NBRC 100828 / KAW 2/3)</name>
    <dbReference type="NCBI Taxonomy" id="1122961"/>
    <lineage>
        <taxon>Archaea</taxon>
        <taxon>Methanobacteriati</taxon>
        <taxon>Thermoplasmatota</taxon>
        <taxon>Thermoplasmata</taxon>
        <taxon>Thermoplasmatales</taxon>
        <taxon>Picrophilaceae</taxon>
        <taxon>Picrophilus</taxon>
    </lineage>
</organism>
<name>RS2_PICTO</name>
<gene>
    <name evidence="1" type="primary">rps2</name>
    <name type="ordered locus">PTO0517</name>
</gene>
<sequence length="200" mass="22745">MMEEELLIPEDEYQKSGIHIGTQIKSKDMDPYIFKIRNDGLYILDIRKTNHALIIAGKMLARYRPEQILAVAQRQYAFRPVSKFSEVVGSKSIIGRFIPGTLTNPALPNYSEAKIILVTDPLADTQAMKEAIKVGIPIIAMCDANNKTDFVDLIIPTNNKGRRSLAVIYWLLAREILKNRGDIKSYDEFKQTIDDFEVQI</sequence>
<keyword id="KW-0687">Ribonucleoprotein</keyword>
<keyword id="KW-0689">Ribosomal protein</keyword>
<comment type="similarity">
    <text evidence="1">Belongs to the universal ribosomal protein uS2 family.</text>
</comment>